<organism>
    <name type="scientific">Rhizobium meliloti (strain 1021)</name>
    <name type="common">Ensifer meliloti</name>
    <name type="synonym">Sinorhizobium meliloti</name>
    <dbReference type="NCBI Taxonomy" id="266834"/>
    <lineage>
        <taxon>Bacteria</taxon>
        <taxon>Pseudomonadati</taxon>
        <taxon>Pseudomonadota</taxon>
        <taxon>Alphaproteobacteria</taxon>
        <taxon>Hyphomicrobiales</taxon>
        <taxon>Rhizobiaceae</taxon>
        <taxon>Sinorhizobium/Ensifer group</taxon>
        <taxon>Sinorhizobium</taxon>
    </lineage>
</organism>
<proteinExistence type="inferred from homology"/>
<keyword id="KW-0028">Amino-acid biosynthesis</keyword>
<keyword id="KW-0963">Cytoplasm</keyword>
<keyword id="KW-0368">Histidine biosynthesis</keyword>
<keyword id="KW-0456">Lyase</keyword>
<keyword id="KW-1185">Reference proteome</keyword>
<reference key="1">
    <citation type="journal article" date="2001" name="Proc. Natl. Acad. Sci. U.S.A.">
        <title>Analysis of the chromosome sequence of the legume symbiont Sinorhizobium meliloti strain 1021.</title>
        <authorList>
            <person name="Capela D."/>
            <person name="Barloy-Hubler F."/>
            <person name="Gouzy J."/>
            <person name="Bothe G."/>
            <person name="Ampe F."/>
            <person name="Batut J."/>
            <person name="Boistard P."/>
            <person name="Becker A."/>
            <person name="Boutry M."/>
            <person name="Cadieu E."/>
            <person name="Dreano S."/>
            <person name="Gloux S."/>
            <person name="Godrie T."/>
            <person name="Goffeau A."/>
            <person name="Kahn D."/>
            <person name="Kiss E."/>
            <person name="Lelaure V."/>
            <person name="Masuy D."/>
            <person name="Pohl T."/>
            <person name="Portetelle D."/>
            <person name="Puehler A."/>
            <person name="Purnelle B."/>
            <person name="Ramsperger U."/>
            <person name="Renard C."/>
            <person name="Thebault P."/>
            <person name="Vandenbol M."/>
            <person name="Weidner S."/>
            <person name="Galibert F."/>
        </authorList>
    </citation>
    <scope>NUCLEOTIDE SEQUENCE [LARGE SCALE GENOMIC DNA]</scope>
    <source>
        <strain>1021</strain>
    </source>
</reference>
<reference key="2">
    <citation type="journal article" date="2001" name="Science">
        <title>The composite genome of the legume symbiont Sinorhizobium meliloti.</title>
        <authorList>
            <person name="Galibert F."/>
            <person name="Finan T.M."/>
            <person name="Long S.R."/>
            <person name="Puehler A."/>
            <person name="Abola P."/>
            <person name="Ampe F."/>
            <person name="Barloy-Hubler F."/>
            <person name="Barnett M.J."/>
            <person name="Becker A."/>
            <person name="Boistard P."/>
            <person name="Bothe G."/>
            <person name="Boutry M."/>
            <person name="Bowser L."/>
            <person name="Buhrmester J."/>
            <person name="Cadieu E."/>
            <person name="Capela D."/>
            <person name="Chain P."/>
            <person name="Cowie A."/>
            <person name="Davis R.W."/>
            <person name="Dreano S."/>
            <person name="Federspiel N.A."/>
            <person name="Fisher R.F."/>
            <person name="Gloux S."/>
            <person name="Godrie T."/>
            <person name="Goffeau A."/>
            <person name="Golding B."/>
            <person name="Gouzy J."/>
            <person name="Gurjal M."/>
            <person name="Hernandez-Lucas I."/>
            <person name="Hong A."/>
            <person name="Huizar L."/>
            <person name="Hyman R.W."/>
            <person name="Jones T."/>
            <person name="Kahn D."/>
            <person name="Kahn M.L."/>
            <person name="Kalman S."/>
            <person name="Keating D.H."/>
            <person name="Kiss E."/>
            <person name="Komp C."/>
            <person name="Lelaure V."/>
            <person name="Masuy D."/>
            <person name="Palm C."/>
            <person name="Peck M.C."/>
            <person name="Pohl T.M."/>
            <person name="Portetelle D."/>
            <person name="Purnelle B."/>
            <person name="Ramsperger U."/>
            <person name="Surzycki R."/>
            <person name="Thebault P."/>
            <person name="Vandenbol M."/>
            <person name="Vorhoelter F.J."/>
            <person name="Weidner S."/>
            <person name="Wells D.H."/>
            <person name="Wong K."/>
            <person name="Yeh K.-C."/>
            <person name="Batut J."/>
        </authorList>
    </citation>
    <scope>NUCLEOTIDE SEQUENCE [LARGE SCALE GENOMIC DNA]</scope>
    <source>
        <strain>1021</strain>
    </source>
</reference>
<comment type="function">
    <text evidence="1">IGPS catalyzes the conversion of PRFAR and glutamine to IGP, AICAR and glutamate. The HisF subunit catalyzes the cyclization activity that produces IGP and AICAR from PRFAR using the ammonia provided by the HisH subunit (By similarity).</text>
</comment>
<comment type="catalytic activity">
    <reaction>
        <text>5-[(5-phospho-1-deoxy-D-ribulos-1-ylimino)methylamino]-1-(5-phospho-beta-D-ribosyl)imidazole-4-carboxamide + L-glutamine = D-erythro-1-(imidazol-4-yl)glycerol 3-phosphate + 5-amino-1-(5-phospho-beta-D-ribosyl)imidazole-4-carboxamide + L-glutamate + H(+)</text>
        <dbReference type="Rhea" id="RHEA:24793"/>
        <dbReference type="ChEBI" id="CHEBI:15378"/>
        <dbReference type="ChEBI" id="CHEBI:29985"/>
        <dbReference type="ChEBI" id="CHEBI:58278"/>
        <dbReference type="ChEBI" id="CHEBI:58359"/>
        <dbReference type="ChEBI" id="CHEBI:58475"/>
        <dbReference type="ChEBI" id="CHEBI:58525"/>
        <dbReference type="EC" id="4.3.2.10"/>
    </reaction>
</comment>
<comment type="pathway">
    <text>Amino-acid biosynthesis; L-histidine biosynthesis; L-histidine from 5-phospho-alpha-D-ribose 1-diphosphate: step 5/9.</text>
</comment>
<comment type="subunit">
    <text evidence="1">Heterodimer of HisH and HisF.</text>
</comment>
<comment type="subcellular location">
    <subcellularLocation>
        <location evidence="1">Cytoplasm</location>
    </subcellularLocation>
</comment>
<comment type="similarity">
    <text evidence="3">Belongs to the HisA/HisF family.</text>
</comment>
<accession>Q92TB3</accession>
<gene>
    <name type="primary">hisF</name>
    <name type="ordered locus">R00051</name>
    <name type="ORF">SMc02569</name>
</gene>
<evidence type="ECO:0000250" key="1"/>
<evidence type="ECO:0000255" key="2"/>
<evidence type="ECO:0000305" key="3"/>
<protein>
    <recommendedName>
        <fullName>Imidazole glycerol phosphate synthase subunit HisF</fullName>
        <ecNumber>4.3.2.10</ecNumber>
    </recommendedName>
    <alternativeName>
        <fullName>IGP synthase cyclase subunit</fullName>
    </alternativeName>
    <alternativeName>
        <fullName>IGP synthase subunit HisF</fullName>
    </alternativeName>
    <alternativeName>
        <fullName>ImGP synthase subunit HisF</fullName>
        <shortName>IGPS subunit HisF</shortName>
    </alternativeName>
</protein>
<feature type="chain" id="PRO_0000142217" description="Imidazole glycerol phosphate synthase subunit HisF">
    <location>
        <begin position="1"/>
        <end position="258"/>
    </location>
</feature>
<feature type="active site" evidence="2">
    <location>
        <position position="12"/>
    </location>
</feature>
<feature type="active site" evidence="2">
    <location>
        <position position="131"/>
    </location>
</feature>
<sequence length="258" mass="27312">MTLKARVIPCLDVKDGRVVKGVNFVDLIDAGDPVEAARAYDAAGADELCFLDITASSDNRETIFDVVARTAEQCFMPLTVGGGVRQVADIRKLLLAGADKVSINTAAVKNPEFVAEAADKFGDQCIVVAIDAKKVSAQGEADRWEIFTHGGRQPTGIDAIEFARKVVDLGAGEILLTSMDRDGTKSGYDISLTRAIADAVRAPVIASGGVGTLDHMVEGIRDGHATAVLAASIFHFGTYSIGEAKRHMAKHGIAMRLD</sequence>
<dbReference type="EC" id="4.3.2.10"/>
<dbReference type="EMBL" id="AL591688">
    <property type="protein sequence ID" value="CAC41438.1"/>
    <property type="molecule type" value="Genomic_DNA"/>
</dbReference>
<dbReference type="RefSeq" id="NP_384157.1">
    <property type="nucleotide sequence ID" value="NC_003047.1"/>
</dbReference>
<dbReference type="RefSeq" id="WP_010968318.1">
    <property type="nucleotide sequence ID" value="NC_003047.1"/>
</dbReference>
<dbReference type="SMR" id="Q92TB3"/>
<dbReference type="EnsemblBacteria" id="CAC41438">
    <property type="protein sequence ID" value="CAC41438"/>
    <property type="gene ID" value="SMc02569"/>
</dbReference>
<dbReference type="KEGG" id="sme:SMc02569"/>
<dbReference type="PATRIC" id="fig|266834.11.peg.1405"/>
<dbReference type="eggNOG" id="COG0107">
    <property type="taxonomic scope" value="Bacteria"/>
</dbReference>
<dbReference type="HOGENOM" id="CLU_048577_4_0_5"/>
<dbReference type="OrthoDB" id="9781903at2"/>
<dbReference type="UniPathway" id="UPA00031">
    <property type="reaction ID" value="UER00010"/>
</dbReference>
<dbReference type="Proteomes" id="UP000001976">
    <property type="component" value="Chromosome"/>
</dbReference>
<dbReference type="GO" id="GO:0005737">
    <property type="term" value="C:cytoplasm"/>
    <property type="evidence" value="ECO:0007669"/>
    <property type="project" value="UniProtKB-SubCell"/>
</dbReference>
<dbReference type="GO" id="GO:0000107">
    <property type="term" value="F:imidazoleglycerol-phosphate synthase activity"/>
    <property type="evidence" value="ECO:0007669"/>
    <property type="project" value="UniProtKB-UniRule"/>
</dbReference>
<dbReference type="GO" id="GO:0016829">
    <property type="term" value="F:lyase activity"/>
    <property type="evidence" value="ECO:0007669"/>
    <property type="project" value="UniProtKB-KW"/>
</dbReference>
<dbReference type="GO" id="GO:0000105">
    <property type="term" value="P:L-histidine biosynthetic process"/>
    <property type="evidence" value="ECO:0007669"/>
    <property type="project" value="UniProtKB-UniRule"/>
</dbReference>
<dbReference type="CDD" id="cd04731">
    <property type="entry name" value="HisF"/>
    <property type="match status" value="1"/>
</dbReference>
<dbReference type="FunFam" id="3.20.20.70:FF:000006">
    <property type="entry name" value="Imidazole glycerol phosphate synthase subunit HisF"/>
    <property type="match status" value="1"/>
</dbReference>
<dbReference type="Gene3D" id="3.20.20.70">
    <property type="entry name" value="Aldolase class I"/>
    <property type="match status" value="1"/>
</dbReference>
<dbReference type="HAMAP" id="MF_01013">
    <property type="entry name" value="HisF"/>
    <property type="match status" value="1"/>
</dbReference>
<dbReference type="InterPro" id="IPR013785">
    <property type="entry name" value="Aldolase_TIM"/>
</dbReference>
<dbReference type="InterPro" id="IPR006062">
    <property type="entry name" value="His_biosynth"/>
</dbReference>
<dbReference type="InterPro" id="IPR004651">
    <property type="entry name" value="HisF"/>
</dbReference>
<dbReference type="InterPro" id="IPR050064">
    <property type="entry name" value="IGPS_HisA/HisF"/>
</dbReference>
<dbReference type="InterPro" id="IPR011060">
    <property type="entry name" value="RibuloseP-bd_barrel"/>
</dbReference>
<dbReference type="NCBIfam" id="TIGR00735">
    <property type="entry name" value="hisF"/>
    <property type="match status" value="1"/>
</dbReference>
<dbReference type="PANTHER" id="PTHR21235:SF2">
    <property type="entry name" value="IMIDAZOLE GLYCEROL PHOSPHATE SYNTHASE HISHF"/>
    <property type="match status" value="1"/>
</dbReference>
<dbReference type="PANTHER" id="PTHR21235">
    <property type="entry name" value="IMIDAZOLE GLYCEROL PHOSPHATE SYNTHASE SUBUNIT HISF/H IGP SYNTHASE SUBUNIT HISF/H"/>
    <property type="match status" value="1"/>
</dbReference>
<dbReference type="Pfam" id="PF00977">
    <property type="entry name" value="His_biosynth"/>
    <property type="match status" value="1"/>
</dbReference>
<dbReference type="SUPFAM" id="SSF51366">
    <property type="entry name" value="Ribulose-phoshate binding barrel"/>
    <property type="match status" value="1"/>
</dbReference>
<name>HIS6_RHIME</name>